<feature type="chain" id="PRO_0000408057" description="Putative antitoxin VapB8">
    <location>
        <begin position="1"/>
        <end position="90"/>
    </location>
</feature>
<feature type="region of interest" description="Disordered" evidence="1">
    <location>
        <begin position="1"/>
        <end position="56"/>
    </location>
</feature>
<feature type="compositionally biased region" description="Gly residues" evidence="1">
    <location>
        <begin position="26"/>
        <end position="36"/>
    </location>
</feature>
<sequence>MEKSRCHAVAHGGGCAGSAKSHKSGGRCGQGRGAGDSHGTRGAGRRYRAASAPHPLAVGAHLRDELAKRSADPRLTDELNDLAGHTLDDL</sequence>
<name>VAPB8_MYCTU</name>
<dbReference type="EMBL" id="AL123456">
    <property type="protein sequence ID" value="CCP43407.1"/>
    <property type="molecule type" value="Genomic_DNA"/>
</dbReference>
<dbReference type="PIR" id="C70535">
    <property type="entry name" value="C70535"/>
</dbReference>
<dbReference type="RefSeq" id="NP_215178.1">
    <property type="nucleotide sequence ID" value="NC_000962.3"/>
</dbReference>
<dbReference type="RefSeq" id="WP_003900200.1">
    <property type="nucleotide sequence ID" value="NC_000962.3"/>
</dbReference>
<dbReference type="STRING" id="83332.Rv0664"/>
<dbReference type="PaxDb" id="83332-Rv0664"/>
<dbReference type="DNASU" id="888146"/>
<dbReference type="GeneID" id="888146"/>
<dbReference type="KEGG" id="mtu:Rv0664"/>
<dbReference type="KEGG" id="mtv:RVBD_0664"/>
<dbReference type="TubercuList" id="Rv0664"/>
<dbReference type="InParanoid" id="O06775"/>
<dbReference type="Proteomes" id="UP000001584">
    <property type="component" value="Chromosome"/>
</dbReference>
<gene>
    <name type="primary">vapB8</name>
    <name type="ordered locus">Rv0664</name>
</gene>
<evidence type="ECO:0000256" key="1">
    <source>
        <dbReference type="SAM" id="MobiDB-lite"/>
    </source>
</evidence>
<evidence type="ECO:0000305" key="2">
    <source>
    </source>
</evidence>
<comment type="function">
    <text evidence="2">Antitoxin component of a possible type II toxin-antitoxin (TA) system. The cognate toxin is VapC8.</text>
</comment>
<keyword id="KW-1185">Reference proteome</keyword>
<keyword id="KW-1277">Toxin-antitoxin system</keyword>
<organism>
    <name type="scientific">Mycobacterium tuberculosis (strain ATCC 25618 / H37Rv)</name>
    <dbReference type="NCBI Taxonomy" id="83332"/>
    <lineage>
        <taxon>Bacteria</taxon>
        <taxon>Bacillati</taxon>
        <taxon>Actinomycetota</taxon>
        <taxon>Actinomycetes</taxon>
        <taxon>Mycobacteriales</taxon>
        <taxon>Mycobacteriaceae</taxon>
        <taxon>Mycobacterium</taxon>
        <taxon>Mycobacterium tuberculosis complex</taxon>
    </lineage>
</organism>
<reference key="1">
    <citation type="journal article" date="1998" name="Nature">
        <title>Deciphering the biology of Mycobacterium tuberculosis from the complete genome sequence.</title>
        <authorList>
            <person name="Cole S.T."/>
            <person name="Brosch R."/>
            <person name="Parkhill J."/>
            <person name="Garnier T."/>
            <person name="Churcher C.M."/>
            <person name="Harris D.E."/>
            <person name="Gordon S.V."/>
            <person name="Eiglmeier K."/>
            <person name="Gas S."/>
            <person name="Barry C.E. III"/>
            <person name="Tekaia F."/>
            <person name="Badcock K."/>
            <person name="Basham D."/>
            <person name="Brown D."/>
            <person name="Chillingworth T."/>
            <person name="Connor R."/>
            <person name="Davies R.M."/>
            <person name="Devlin K."/>
            <person name="Feltwell T."/>
            <person name="Gentles S."/>
            <person name="Hamlin N."/>
            <person name="Holroyd S."/>
            <person name="Hornsby T."/>
            <person name="Jagels K."/>
            <person name="Krogh A."/>
            <person name="McLean J."/>
            <person name="Moule S."/>
            <person name="Murphy L.D."/>
            <person name="Oliver S."/>
            <person name="Osborne J."/>
            <person name="Quail M.A."/>
            <person name="Rajandream M.A."/>
            <person name="Rogers J."/>
            <person name="Rutter S."/>
            <person name="Seeger K."/>
            <person name="Skelton S."/>
            <person name="Squares S."/>
            <person name="Squares R."/>
            <person name="Sulston J.E."/>
            <person name="Taylor K."/>
            <person name="Whitehead S."/>
            <person name="Barrell B.G."/>
        </authorList>
    </citation>
    <scope>NUCLEOTIDE SEQUENCE [LARGE SCALE GENOMIC DNA]</scope>
    <source>
        <strain>ATCC 25618 / H37Rv</strain>
    </source>
</reference>
<reference key="2">
    <citation type="journal article" date="2005" name="Nucleic Acids Res.">
        <title>Toxin-antitoxin loci are highly abundant in free-living but lost from host-associated prokaryotes.</title>
        <authorList>
            <person name="Pandey D.P."/>
            <person name="Gerdes K."/>
        </authorList>
    </citation>
    <scope>POSSIBLE FUNCTION</scope>
    <source>
        <strain>ATCC 25618 / H37Rv</strain>
    </source>
</reference>
<protein>
    <recommendedName>
        <fullName>Putative antitoxin VapB8</fullName>
    </recommendedName>
</protein>
<proteinExistence type="predicted"/>
<accession>O06775</accession>
<accession>L0T7D0</accession>